<keyword id="KW-0025">Alternative splicing</keyword>
<keyword id="KW-0539">Nucleus</keyword>
<keyword id="KW-0597">Phosphoprotein</keyword>
<keyword id="KW-1185">Reference proteome</keyword>
<comment type="subunit">
    <text evidence="2">Associated with the Mediator complex.</text>
</comment>
<comment type="subcellular location">
    <subcellularLocation>
        <location evidence="5">Nucleus</location>
    </subcellularLocation>
</comment>
<comment type="alternative products">
    <event type="alternative splicing"/>
    <isoform>
        <id>F4KF27-1</id>
        <name>1</name>
        <sequence type="displayed"/>
    </isoform>
    <isoform>
        <id>F4KF27-2</id>
        <name>2</name>
        <sequence type="described" ref="VSP_044126"/>
    </isoform>
</comment>
<evidence type="ECO:0000256" key="1">
    <source>
        <dbReference type="SAM" id="MobiDB-lite"/>
    </source>
</evidence>
<evidence type="ECO:0000269" key="2">
    <source>
    </source>
</evidence>
<evidence type="ECO:0000303" key="3">
    <source>
    </source>
</evidence>
<evidence type="ECO:0000303" key="4">
    <source>
    </source>
</evidence>
<evidence type="ECO:0000305" key="5"/>
<evidence type="ECO:0007744" key="6">
    <source>
    </source>
</evidence>
<accession>F4KF27</accession>
<accession>Q9FLF2</accession>
<organism>
    <name type="scientific">Arabidopsis thaliana</name>
    <name type="common">Mouse-ear cress</name>
    <dbReference type="NCBI Taxonomy" id="3702"/>
    <lineage>
        <taxon>Eukaryota</taxon>
        <taxon>Viridiplantae</taxon>
        <taxon>Streptophyta</taxon>
        <taxon>Embryophyta</taxon>
        <taxon>Tracheophyta</taxon>
        <taxon>Spermatophyta</taxon>
        <taxon>Magnoliopsida</taxon>
        <taxon>eudicotyledons</taxon>
        <taxon>Gunneridae</taxon>
        <taxon>Pentapetalae</taxon>
        <taxon>rosids</taxon>
        <taxon>malvids</taxon>
        <taxon>Brassicales</taxon>
        <taxon>Brassicaceae</taxon>
        <taxon>Camelineae</taxon>
        <taxon>Arabidopsis</taxon>
    </lineage>
</organism>
<proteinExistence type="evidence at protein level"/>
<protein>
    <recommendedName>
        <fullName>Mediator-associated protein 2</fullName>
    </recommendedName>
</protein>
<feature type="chain" id="PRO_0000419194" description="Mediator-associated protein 2">
    <location>
        <begin position="1"/>
        <end position="211"/>
    </location>
</feature>
<feature type="region of interest" description="Disordered" evidence="1">
    <location>
        <begin position="128"/>
        <end position="211"/>
    </location>
</feature>
<feature type="compositionally biased region" description="Low complexity" evidence="1">
    <location>
        <begin position="134"/>
        <end position="148"/>
    </location>
</feature>
<feature type="compositionally biased region" description="Low complexity" evidence="1">
    <location>
        <begin position="189"/>
        <end position="198"/>
    </location>
</feature>
<feature type="compositionally biased region" description="Basic residues" evidence="1">
    <location>
        <begin position="202"/>
        <end position="211"/>
    </location>
</feature>
<feature type="modified residue" description="Phosphoserine" evidence="6">
    <location>
        <position position="173"/>
    </location>
</feature>
<feature type="splice variant" id="VSP_044126" description="In isoform 2." evidence="3 4">
    <location>
        <begin position="66"/>
        <end position="73"/>
    </location>
</feature>
<reference key="1">
    <citation type="journal article" date="1998" name="DNA Res.">
        <title>Structural analysis of Arabidopsis thaliana chromosome 5. IV. Sequence features of the regions of 1,456,315 bp covered by nineteen physically assigned P1 and TAC clones.</title>
        <authorList>
            <person name="Sato S."/>
            <person name="Kaneko T."/>
            <person name="Kotani H."/>
            <person name="Nakamura Y."/>
            <person name="Asamizu E."/>
            <person name="Miyajima N."/>
            <person name="Tabata S."/>
        </authorList>
    </citation>
    <scope>NUCLEOTIDE SEQUENCE [LARGE SCALE GENOMIC DNA] (ISOFORM 2)</scope>
    <source>
        <strain>cv. Columbia</strain>
    </source>
</reference>
<reference key="2">
    <citation type="journal article" date="2017" name="Plant J.">
        <title>Araport11: a complete reannotation of the Arabidopsis thaliana reference genome.</title>
        <authorList>
            <person name="Cheng C.Y."/>
            <person name="Krishnakumar V."/>
            <person name="Chan A.P."/>
            <person name="Thibaud-Nissen F."/>
            <person name="Schobel S."/>
            <person name="Town C.D."/>
        </authorList>
    </citation>
    <scope>GENOME REANNOTATION</scope>
    <source>
        <strain>cv. Columbia</strain>
    </source>
</reference>
<reference key="3">
    <citation type="journal article" date="2002" name="Science">
        <title>Functional annotation of a full-length Arabidopsis cDNA collection.</title>
        <authorList>
            <person name="Seki M."/>
            <person name="Narusaka M."/>
            <person name="Kamiya A."/>
            <person name="Ishida J."/>
            <person name="Satou M."/>
            <person name="Sakurai T."/>
            <person name="Nakajima M."/>
            <person name="Enju A."/>
            <person name="Akiyama K."/>
            <person name="Oono Y."/>
            <person name="Muramatsu M."/>
            <person name="Hayashizaki Y."/>
            <person name="Kawai J."/>
            <person name="Carninci P."/>
            <person name="Itoh M."/>
            <person name="Ishii Y."/>
            <person name="Arakawa T."/>
            <person name="Shibata K."/>
            <person name="Shinagawa A."/>
            <person name="Shinozaki K."/>
        </authorList>
    </citation>
    <scope>NUCLEOTIDE SEQUENCE [LARGE SCALE MRNA] (ISOFORM 2)</scope>
    <source>
        <strain>cv. Columbia</strain>
    </source>
</reference>
<reference key="4">
    <citation type="journal article" date="2003" name="Science">
        <title>Empirical analysis of transcriptional activity in the Arabidopsis genome.</title>
        <authorList>
            <person name="Yamada K."/>
            <person name="Lim J."/>
            <person name="Dale J.M."/>
            <person name="Chen H."/>
            <person name="Shinn P."/>
            <person name="Palm C.J."/>
            <person name="Southwick A.M."/>
            <person name="Wu H.C."/>
            <person name="Kim C.J."/>
            <person name="Nguyen M."/>
            <person name="Pham P.K."/>
            <person name="Cheuk R.F."/>
            <person name="Karlin-Newmann G."/>
            <person name="Liu S.X."/>
            <person name="Lam B."/>
            <person name="Sakano H."/>
            <person name="Wu T."/>
            <person name="Yu G."/>
            <person name="Miranda M."/>
            <person name="Quach H.L."/>
            <person name="Tripp M."/>
            <person name="Chang C.H."/>
            <person name="Lee J.M."/>
            <person name="Toriumi M.J."/>
            <person name="Chan M.M."/>
            <person name="Tang C.C."/>
            <person name="Onodera C.S."/>
            <person name="Deng J.M."/>
            <person name="Akiyama K."/>
            <person name="Ansari Y."/>
            <person name="Arakawa T."/>
            <person name="Banh J."/>
            <person name="Banno F."/>
            <person name="Bowser L."/>
            <person name="Brooks S.Y."/>
            <person name="Carninci P."/>
            <person name="Chao Q."/>
            <person name="Choy N."/>
            <person name="Enju A."/>
            <person name="Goldsmith A.D."/>
            <person name="Gurjal M."/>
            <person name="Hansen N.F."/>
            <person name="Hayashizaki Y."/>
            <person name="Johnson-Hopson C."/>
            <person name="Hsuan V.W."/>
            <person name="Iida K."/>
            <person name="Karnes M."/>
            <person name="Khan S."/>
            <person name="Koesema E."/>
            <person name="Ishida J."/>
            <person name="Jiang P.X."/>
            <person name="Jones T."/>
            <person name="Kawai J."/>
            <person name="Kamiya A."/>
            <person name="Meyers C."/>
            <person name="Nakajima M."/>
            <person name="Narusaka M."/>
            <person name="Seki M."/>
            <person name="Sakurai T."/>
            <person name="Satou M."/>
            <person name="Tamse R."/>
            <person name="Vaysberg M."/>
            <person name="Wallender E.K."/>
            <person name="Wong C."/>
            <person name="Yamamura Y."/>
            <person name="Yuan S."/>
            <person name="Shinozaki K."/>
            <person name="Davis R.W."/>
            <person name="Theologis A."/>
            <person name="Ecker J.R."/>
        </authorList>
    </citation>
    <scope>NUCLEOTIDE SEQUENCE [LARGE SCALE MRNA] (ISOFORM 2)</scope>
    <source>
        <strain>cv. Columbia</strain>
    </source>
</reference>
<reference key="5">
    <citation type="journal article" date="2007" name="Mol. Cell">
        <title>Purification of a plant mediator from Arabidopsis thaliana identifies PFT1 as the Med25 subunit.</title>
        <authorList>
            <person name="Baeckstroem S."/>
            <person name="Elfving N."/>
            <person name="Nilsson R."/>
            <person name="Wingsle G."/>
            <person name="Bjoerklund S."/>
        </authorList>
    </citation>
    <scope>IDENTIFICATION BY MASS SPECTROMETRY</scope>
    <scope>SUBUNIT</scope>
</reference>
<reference key="6">
    <citation type="journal article" date="2009" name="Plant Physiol.">
        <title>Large-scale Arabidopsis phosphoproteome profiling reveals novel chloroplast kinase substrates and phosphorylation networks.</title>
        <authorList>
            <person name="Reiland S."/>
            <person name="Messerli G."/>
            <person name="Baerenfaller K."/>
            <person name="Gerrits B."/>
            <person name="Endler A."/>
            <person name="Grossmann J."/>
            <person name="Gruissem W."/>
            <person name="Baginsky S."/>
        </authorList>
    </citation>
    <scope>PHOSPHORYLATION [LARGE SCALE ANALYSIS] AT SER-173</scope>
    <scope>IDENTIFICATION BY MASS SPECTROMETRY [LARGE SCALE ANALYSIS]</scope>
</reference>
<gene>
    <name type="ordered locus">At5g64680</name>
    <name type="ORF">MUB3.20</name>
</gene>
<name>MDA2_ARATH</name>
<dbReference type="EMBL" id="AB010076">
    <property type="protein sequence ID" value="BAB11435.1"/>
    <property type="molecule type" value="Genomic_DNA"/>
</dbReference>
<dbReference type="EMBL" id="CP002688">
    <property type="protein sequence ID" value="AED97936.1"/>
    <property type="molecule type" value="Genomic_DNA"/>
</dbReference>
<dbReference type="EMBL" id="CP002688">
    <property type="protein sequence ID" value="AED97937.1"/>
    <property type="molecule type" value="Genomic_DNA"/>
</dbReference>
<dbReference type="EMBL" id="CP002688">
    <property type="protein sequence ID" value="AED97938.1"/>
    <property type="molecule type" value="Genomic_DNA"/>
</dbReference>
<dbReference type="EMBL" id="AK118987">
    <property type="protein sequence ID" value="BAC43563.1"/>
    <property type="molecule type" value="mRNA"/>
</dbReference>
<dbReference type="EMBL" id="BT005670">
    <property type="protein sequence ID" value="AAO64090.1"/>
    <property type="molecule type" value="mRNA"/>
</dbReference>
<dbReference type="RefSeq" id="NP_001154796.1">
    <molecule id="F4KF27-1"/>
    <property type="nucleotide sequence ID" value="NM_001161324.1"/>
</dbReference>
<dbReference type="RefSeq" id="NP_201273.1">
    <molecule id="F4KF27-2"/>
    <property type="nucleotide sequence ID" value="NM_125864.3"/>
</dbReference>
<dbReference type="RefSeq" id="NP_851270.1">
    <molecule id="F4KF27-2"/>
    <property type="nucleotide sequence ID" value="NM_180939.2"/>
</dbReference>
<dbReference type="FunCoup" id="F4KF27">
    <property type="interactions" value="1195"/>
</dbReference>
<dbReference type="IntAct" id="F4KF27">
    <property type="interactions" value="2"/>
</dbReference>
<dbReference type="STRING" id="3702.F4KF27"/>
<dbReference type="iPTMnet" id="F4KF27"/>
<dbReference type="PaxDb" id="3702-AT5G64680.3"/>
<dbReference type="ProteomicsDB" id="250837">
    <molecule id="F4KF27-1"/>
</dbReference>
<dbReference type="EnsemblPlants" id="AT5G64680.1">
    <molecule id="F4KF27-2"/>
    <property type="protein sequence ID" value="AT5G64680.1"/>
    <property type="gene ID" value="AT5G64680"/>
</dbReference>
<dbReference type="EnsemblPlants" id="AT5G64680.2">
    <molecule id="F4KF27-2"/>
    <property type="protein sequence ID" value="AT5G64680.2"/>
    <property type="gene ID" value="AT5G64680"/>
</dbReference>
<dbReference type="EnsemblPlants" id="AT5G64680.3">
    <molecule id="F4KF27-1"/>
    <property type="protein sequence ID" value="AT5G64680.3"/>
    <property type="gene ID" value="AT5G64680"/>
</dbReference>
<dbReference type="GeneID" id="836589"/>
<dbReference type="Gramene" id="AT5G64680.1">
    <molecule id="F4KF27-2"/>
    <property type="protein sequence ID" value="AT5G64680.1"/>
    <property type="gene ID" value="AT5G64680"/>
</dbReference>
<dbReference type="Gramene" id="AT5G64680.2">
    <molecule id="F4KF27-2"/>
    <property type="protein sequence ID" value="AT5G64680.2"/>
    <property type="gene ID" value="AT5G64680"/>
</dbReference>
<dbReference type="Gramene" id="AT5G64680.3">
    <molecule id="F4KF27-1"/>
    <property type="protein sequence ID" value="AT5G64680.3"/>
    <property type="gene ID" value="AT5G64680"/>
</dbReference>
<dbReference type="KEGG" id="ath:AT5G64680"/>
<dbReference type="Araport" id="AT5G64680"/>
<dbReference type="TAIR" id="AT5G64680"/>
<dbReference type="eggNOG" id="ENOG502RZN5">
    <property type="taxonomic scope" value="Eukaryota"/>
</dbReference>
<dbReference type="HOGENOM" id="CLU_070733_1_1_1"/>
<dbReference type="InParanoid" id="F4KF27"/>
<dbReference type="OMA" id="IQCPISH"/>
<dbReference type="CD-CODE" id="4299E36E">
    <property type="entry name" value="Nucleolus"/>
</dbReference>
<dbReference type="PRO" id="PR:F4KF27"/>
<dbReference type="Proteomes" id="UP000006548">
    <property type="component" value="Chromosome 5"/>
</dbReference>
<dbReference type="ExpressionAtlas" id="F4KF27">
    <property type="expression patterns" value="baseline and differential"/>
</dbReference>
<dbReference type="GO" id="GO:0016592">
    <property type="term" value="C:mediator complex"/>
    <property type="evidence" value="ECO:0000314"/>
    <property type="project" value="UniProtKB"/>
</dbReference>
<dbReference type="GO" id="GO:0005730">
    <property type="term" value="C:nucleolus"/>
    <property type="evidence" value="ECO:0007005"/>
    <property type="project" value="TAIR"/>
</dbReference>
<dbReference type="InterPro" id="IPR038823">
    <property type="entry name" value="MED2_plant"/>
</dbReference>
<dbReference type="PANTHER" id="PTHR36407">
    <property type="entry name" value="MEDIATOR-ASSOCIATED PROTEIN 2"/>
    <property type="match status" value="1"/>
</dbReference>
<dbReference type="PANTHER" id="PTHR36407:SF1">
    <property type="entry name" value="MEDIATOR-ASSOCIATED PROTEIN 2"/>
    <property type="match status" value="1"/>
</dbReference>
<sequence>MDFDFKVSGDFIVSGAEQLDDTDLTRSDEFWLIQAPLGQFPEIEENTLKIEPDKDGLFGEFKDSNAGSLHLCLGAKYDLASFHSQDAGAELIIPSEESMIVGKITRRVALVRYPEPNELLQKMKARTQQKLVGSVTNSSKKSSNLTQSSRHKSGTRSSREKSMFSGFTETPKSPKRKNSESSSGKHRSSTSTVSGSSERSAKSKKKVKKEE</sequence>